<gene>
    <name evidence="1" type="primary">fadB</name>
    <name type="ordered locus">ECA0208</name>
</gene>
<evidence type="ECO:0000255" key="1">
    <source>
        <dbReference type="HAMAP-Rule" id="MF_01621"/>
    </source>
</evidence>
<proteinExistence type="inferred from homology"/>
<protein>
    <recommendedName>
        <fullName evidence="1">Fatty acid oxidation complex subunit alpha</fullName>
    </recommendedName>
    <domain>
        <recommendedName>
            <fullName evidence="1">Enoyl-CoA hydratase/Delta(3)-cis-Delta(2)-trans-enoyl-CoA isomerase/3-hydroxybutyryl-CoA epimerase</fullName>
            <ecNumber evidence="1">4.2.1.17</ecNumber>
            <ecNumber evidence="1">5.1.2.3</ecNumber>
            <ecNumber evidence="1">5.3.3.8</ecNumber>
        </recommendedName>
    </domain>
    <domain>
        <recommendedName>
            <fullName evidence="1">3-hydroxyacyl-CoA dehydrogenase</fullName>
            <ecNumber evidence="1">1.1.1.35</ecNumber>
        </recommendedName>
    </domain>
</protein>
<keyword id="KW-0276">Fatty acid metabolism</keyword>
<keyword id="KW-0413">Isomerase</keyword>
<keyword id="KW-0442">Lipid degradation</keyword>
<keyword id="KW-0443">Lipid metabolism</keyword>
<keyword id="KW-0456">Lyase</keyword>
<keyword id="KW-0511">Multifunctional enzyme</keyword>
<keyword id="KW-0520">NAD</keyword>
<keyword id="KW-0560">Oxidoreductase</keyword>
<keyword id="KW-1185">Reference proteome</keyword>
<feature type="chain" id="PRO_0000109267" description="Fatty acid oxidation complex subunit alpha">
    <location>
        <begin position="1"/>
        <end position="729"/>
    </location>
</feature>
<feature type="region of interest" description="Enoyl-CoA hydratase/isomerase" evidence="1">
    <location>
        <begin position="1"/>
        <end position="189"/>
    </location>
</feature>
<feature type="region of interest" description="3-hydroxyacyl-CoA dehydrogenase" evidence="1">
    <location>
        <begin position="311"/>
        <end position="729"/>
    </location>
</feature>
<feature type="active site" description="For 3-hydroxyacyl-CoA dehydrogenase activity" evidence="1">
    <location>
        <position position="450"/>
    </location>
</feature>
<feature type="binding site" evidence="1">
    <location>
        <position position="296"/>
    </location>
    <ligand>
        <name>substrate</name>
    </ligand>
</feature>
<feature type="binding site" evidence="1">
    <location>
        <position position="324"/>
    </location>
    <ligand>
        <name>NAD(+)</name>
        <dbReference type="ChEBI" id="CHEBI:57540"/>
    </ligand>
</feature>
<feature type="binding site" evidence="1">
    <location>
        <position position="343"/>
    </location>
    <ligand>
        <name>NAD(+)</name>
        <dbReference type="ChEBI" id="CHEBI:57540"/>
    </ligand>
</feature>
<feature type="binding site" evidence="1">
    <location>
        <begin position="400"/>
        <end position="402"/>
    </location>
    <ligand>
        <name>NAD(+)</name>
        <dbReference type="ChEBI" id="CHEBI:57540"/>
    </ligand>
</feature>
<feature type="binding site" evidence="1">
    <location>
        <position position="407"/>
    </location>
    <ligand>
        <name>NAD(+)</name>
        <dbReference type="ChEBI" id="CHEBI:57540"/>
    </ligand>
</feature>
<feature type="binding site" evidence="1">
    <location>
        <position position="429"/>
    </location>
    <ligand>
        <name>NAD(+)</name>
        <dbReference type="ChEBI" id="CHEBI:57540"/>
    </ligand>
</feature>
<feature type="binding site" evidence="1">
    <location>
        <position position="453"/>
    </location>
    <ligand>
        <name>NAD(+)</name>
        <dbReference type="ChEBI" id="CHEBI:57540"/>
    </ligand>
</feature>
<feature type="binding site" evidence="1">
    <location>
        <position position="500"/>
    </location>
    <ligand>
        <name>substrate</name>
    </ligand>
</feature>
<feature type="binding site" evidence="1">
    <location>
        <position position="660"/>
    </location>
    <ligand>
        <name>substrate</name>
    </ligand>
</feature>
<feature type="site" description="Important for catalytic activity" evidence="1">
    <location>
        <position position="119"/>
    </location>
</feature>
<feature type="site" description="Important for catalytic activity" evidence="1">
    <location>
        <position position="139"/>
    </location>
</feature>
<dbReference type="EC" id="4.2.1.17" evidence="1"/>
<dbReference type="EC" id="5.1.2.3" evidence="1"/>
<dbReference type="EC" id="5.3.3.8" evidence="1"/>
<dbReference type="EC" id="1.1.1.35" evidence="1"/>
<dbReference type="EMBL" id="BX950851">
    <property type="protein sequence ID" value="CAG73127.1"/>
    <property type="molecule type" value="Genomic_DNA"/>
</dbReference>
<dbReference type="RefSeq" id="WP_011091847.1">
    <property type="nucleotide sequence ID" value="NC_004547.2"/>
</dbReference>
<dbReference type="SMR" id="Q6DAP5"/>
<dbReference type="STRING" id="218491.ECA0208"/>
<dbReference type="KEGG" id="eca:ECA0208"/>
<dbReference type="PATRIC" id="fig|218491.5.peg.207"/>
<dbReference type="eggNOG" id="COG1024">
    <property type="taxonomic scope" value="Bacteria"/>
</dbReference>
<dbReference type="eggNOG" id="COG1250">
    <property type="taxonomic scope" value="Bacteria"/>
</dbReference>
<dbReference type="HOGENOM" id="CLU_009834_16_3_6"/>
<dbReference type="OrthoDB" id="5389341at2"/>
<dbReference type="UniPathway" id="UPA00659"/>
<dbReference type="Proteomes" id="UP000007966">
    <property type="component" value="Chromosome"/>
</dbReference>
<dbReference type="GO" id="GO:0036125">
    <property type="term" value="C:fatty acid beta-oxidation multienzyme complex"/>
    <property type="evidence" value="ECO:0007669"/>
    <property type="project" value="InterPro"/>
</dbReference>
<dbReference type="GO" id="GO:0008692">
    <property type="term" value="F:3-hydroxybutyryl-CoA epimerase activity"/>
    <property type="evidence" value="ECO:0007669"/>
    <property type="project" value="UniProtKB-UniRule"/>
</dbReference>
<dbReference type="GO" id="GO:0004165">
    <property type="term" value="F:delta(3)-delta(2)-enoyl-CoA isomerase activity"/>
    <property type="evidence" value="ECO:0007669"/>
    <property type="project" value="UniProtKB-UniRule"/>
</dbReference>
<dbReference type="GO" id="GO:0004300">
    <property type="term" value="F:enoyl-CoA hydratase activity"/>
    <property type="evidence" value="ECO:0007669"/>
    <property type="project" value="UniProtKB-UniRule"/>
</dbReference>
<dbReference type="GO" id="GO:0016509">
    <property type="term" value="F:long-chain-3-hydroxyacyl-CoA dehydrogenase activity"/>
    <property type="evidence" value="ECO:0007669"/>
    <property type="project" value="TreeGrafter"/>
</dbReference>
<dbReference type="GO" id="GO:0070403">
    <property type="term" value="F:NAD+ binding"/>
    <property type="evidence" value="ECO:0007669"/>
    <property type="project" value="InterPro"/>
</dbReference>
<dbReference type="GO" id="GO:0006635">
    <property type="term" value="P:fatty acid beta-oxidation"/>
    <property type="evidence" value="ECO:0007669"/>
    <property type="project" value="UniProtKB-UniRule"/>
</dbReference>
<dbReference type="CDD" id="cd06558">
    <property type="entry name" value="crotonase-like"/>
    <property type="match status" value="1"/>
</dbReference>
<dbReference type="FunFam" id="1.10.1040.50:FF:000001">
    <property type="entry name" value="Fatty acid oxidation complex subunit alpha"/>
    <property type="match status" value="1"/>
</dbReference>
<dbReference type="FunFam" id="3.90.226.10:FF:000018">
    <property type="entry name" value="Fatty acid oxidation complex subunit alpha"/>
    <property type="match status" value="1"/>
</dbReference>
<dbReference type="FunFam" id="3.40.50.720:FF:000009">
    <property type="entry name" value="Fatty oxidation complex, alpha subunit"/>
    <property type="match status" value="1"/>
</dbReference>
<dbReference type="Gene3D" id="1.10.1040.50">
    <property type="match status" value="1"/>
</dbReference>
<dbReference type="Gene3D" id="3.90.226.10">
    <property type="entry name" value="2-enoyl-CoA Hydratase, Chain A, domain 1"/>
    <property type="match status" value="1"/>
</dbReference>
<dbReference type="Gene3D" id="3.40.50.720">
    <property type="entry name" value="NAD(P)-binding Rossmann-like Domain"/>
    <property type="match status" value="1"/>
</dbReference>
<dbReference type="HAMAP" id="MF_01621">
    <property type="entry name" value="FadB"/>
    <property type="match status" value="1"/>
</dbReference>
<dbReference type="InterPro" id="IPR006180">
    <property type="entry name" value="3-OHacyl-CoA_DH_CS"/>
</dbReference>
<dbReference type="InterPro" id="IPR006176">
    <property type="entry name" value="3-OHacyl-CoA_DH_NAD-bd"/>
</dbReference>
<dbReference type="InterPro" id="IPR006108">
    <property type="entry name" value="3HC_DH_C"/>
</dbReference>
<dbReference type="InterPro" id="IPR008927">
    <property type="entry name" value="6-PGluconate_DH-like_C_sf"/>
</dbReference>
<dbReference type="InterPro" id="IPR029045">
    <property type="entry name" value="ClpP/crotonase-like_dom_sf"/>
</dbReference>
<dbReference type="InterPro" id="IPR001753">
    <property type="entry name" value="Enoyl-CoA_hydra/iso"/>
</dbReference>
<dbReference type="InterPro" id="IPR050136">
    <property type="entry name" value="FA_oxidation_alpha_subunit"/>
</dbReference>
<dbReference type="InterPro" id="IPR012799">
    <property type="entry name" value="FadB"/>
</dbReference>
<dbReference type="InterPro" id="IPR036291">
    <property type="entry name" value="NAD(P)-bd_dom_sf"/>
</dbReference>
<dbReference type="NCBIfam" id="TIGR02437">
    <property type="entry name" value="FadB"/>
    <property type="match status" value="1"/>
</dbReference>
<dbReference type="NCBIfam" id="NF008727">
    <property type="entry name" value="PRK11730.1"/>
    <property type="match status" value="1"/>
</dbReference>
<dbReference type="PANTHER" id="PTHR43612">
    <property type="entry name" value="TRIFUNCTIONAL ENZYME SUBUNIT ALPHA"/>
    <property type="match status" value="1"/>
</dbReference>
<dbReference type="PANTHER" id="PTHR43612:SF3">
    <property type="entry name" value="TRIFUNCTIONAL ENZYME SUBUNIT ALPHA, MITOCHONDRIAL"/>
    <property type="match status" value="1"/>
</dbReference>
<dbReference type="Pfam" id="PF00725">
    <property type="entry name" value="3HCDH"/>
    <property type="match status" value="2"/>
</dbReference>
<dbReference type="Pfam" id="PF02737">
    <property type="entry name" value="3HCDH_N"/>
    <property type="match status" value="1"/>
</dbReference>
<dbReference type="Pfam" id="PF00378">
    <property type="entry name" value="ECH_1"/>
    <property type="match status" value="1"/>
</dbReference>
<dbReference type="SUPFAM" id="SSF48179">
    <property type="entry name" value="6-phosphogluconate dehydrogenase C-terminal domain-like"/>
    <property type="match status" value="2"/>
</dbReference>
<dbReference type="SUPFAM" id="SSF52096">
    <property type="entry name" value="ClpP/crotonase"/>
    <property type="match status" value="1"/>
</dbReference>
<dbReference type="SUPFAM" id="SSF51735">
    <property type="entry name" value="NAD(P)-binding Rossmann-fold domains"/>
    <property type="match status" value="1"/>
</dbReference>
<dbReference type="PROSITE" id="PS00067">
    <property type="entry name" value="3HCDH"/>
    <property type="match status" value="1"/>
</dbReference>
<accession>Q6DAP5</accession>
<name>FADB_PECAS</name>
<comment type="function">
    <text evidence="1">Involved in the aerobic and anaerobic degradation of long-chain fatty acids via beta-oxidation cycle. Catalyzes the formation of 3-oxoacyl-CoA from enoyl-CoA via L-3-hydroxyacyl-CoA. It can also use D-3-hydroxyacyl-CoA and cis-3-enoyl-CoA as substrate.</text>
</comment>
<comment type="catalytic activity">
    <reaction evidence="1">
        <text>a (3S)-3-hydroxyacyl-CoA + NAD(+) = a 3-oxoacyl-CoA + NADH + H(+)</text>
        <dbReference type="Rhea" id="RHEA:22432"/>
        <dbReference type="ChEBI" id="CHEBI:15378"/>
        <dbReference type="ChEBI" id="CHEBI:57318"/>
        <dbReference type="ChEBI" id="CHEBI:57540"/>
        <dbReference type="ChEBI" id="CHEBI:57945"/>
        <dbReference type="ChEBI" id="CHEBI:90726"/>
        <dbReference type="EC" id="1.1.1.35"/>
    </reaction>
</comment>
<comment type="catalytic activity">
    <reaction evidence="1">
        <text>a (3S)-3-hydroxyacyl-CoA = a (2E)-enoyl-CoA + H2O</text>
        <dbReference type="Rhea" id="RHEA:16105"/>
        <dbReference type="ChEBI" id="CHEBI:15377"/>
        <dbReference type="ChEBI" id="CHEBI:57318"/>
        <dbReference type="ChEBI" id="CHEBI:58856"/>
        <dbReference type="EC" id="4.2.1.17"/>
    </reaction>
</comment>
<comment type="catalytic activity">
    <reaction evidence="1">
        <text>a 4-saturated-(3S)-3-hydroxyacyl-CoA = a (3E)-enoyl-CoA + H2O</text>
        <dbReference type="Rhea" id="RHEA:20724"/>
        <dbReference type="ChEBI" id="CHEBI:15377"/>
        <dbReference type="ChEBI" id="CHEBI:58521"/>
        <dbReference type="ChEBI" id="CHEBI:137480"/>
        <dbReference type="EC" id="4.2.1.17"/>
    </reaction>
</comment>
<comment type="catalytic activity">
    <reaction evidence="1">
        <text>(3S)-3-hydroxybutanoyl-CoA = (3R)-3-hydroxybutanoyl-CoA</text>
        <dbReference type="Rhea" id="RHEA:21760"/>
        <dbReference type="ChEBI" id="CHEBI:57315"/>
        <dbReference type="ChEBI" id="CHEBI:57316"/>
        <dbReference type="EC" id="5.1.2.3"/>
    </reaction>
</comment>
<comment type="catalytic activity">
    <reaction evidence="1">
        <text>a (3Z)-enoyl-CoA = a 4-saturated (2E)-enoyl-CoA</text>
        <dbReference type="Rhea" id="RHEA:45900"/>
        <dbReference type="ChEBI" id="CHEBI:85097"/>
        <dbReference type="ChEBI" id="CHEBI:85489"/>
        <dbReference type="EC" id="5.3.3.8"/>
    </reaction>
</comment>
<comment type="catalytic activity">
    <reaction evidence="1">
        <text>a (3E)-enoyl-CoA = a 4-saturated (2E)-enoyl-CoA</text>
        <dbReference type="Rhea" id="RHEA:45228"/>
        <dbReference type="ChEBI" id="CHEBI:58521"/>
        <dbReference type="ChEBI" id="CHEBI:85097"/>
        <dbReference type="EC" id="5.3.3.8"/>
    </reaction>
</comment>
<comment type="pathway">
    <text evidence="1">Lipid metabolism; fatty acid beta-oxidation.</text>
</comment>
<comment type="subunit">
    <text evidence="1">Heterotetramer of two alpha chains (FadB) and two beta chains (FadA).</text>
</comment>
<comment type="similarity">
    <text evidence="1">In the N-terminal section; belongs to the enoyl-CoA hydratase/isomerase family.</text>
</comment>
<comment type="similarity">
    <text evidence="1">In the C-terminal section; belongs to the 3-hydroxyacyl-CoA dehydrogenase family.</text>
</comment>
<reference key="1">
    <citation type="journal article" date="2004" name="Proc. Natl. Acad. Sci. U.S.A.">
        <title>Genome sequence of the enterobacterial phytopathogen Erwinia carotovora subsp. atroseptica and characterization of virulence factors.</title>
        <authorList>
            <person name="Bell K.S."/>
            <person name="Sebaihia M."/>
            <person name="Pritchard L."/>
            <person name="Holden M.T.G."/>
            <person name="Hyman L.J."/>
            <person name="Holeva M.C."/>
            <person name="Thomson N.R."/>
            <person name="Bentley S.D."/>
            <person name="Churcher L.J.C."/>
            <person name="Mungall K."/>
            <person name="Atkin R."/>
            <person name="Bason N."/>
            <person name="Brooks K."/>
            <person name="Chillingworth T."/>
            <person name="Clark K."/>
            <person name="Doggett J."/>
            <person name="Fraser A."/>
            <person name="Hance Z."/>
            <person name="Hauser H."/>
            <person name="Jagels K."/>
            <person name="Moule S."/>
            <person name="Norbertczak H."/>
            <person name="Ormond D."/>
            <person name="Price C."/>
            <person name="Quail M.A."/>
            <person name="Sanders M."/>
            <person name="Walker D."/>
            <person name="Whitehead S."/>
            <person name="Salmond G.P.C."/>
            <person name="Birch P.R.J."/>
            <person name="Parkhill J."/>
            <person name="Toth I.K."/>
        </authorList>
    </citation>
    <scope>NUCLEOTIDE SEQUENCE [LARGE SCALE GENOMIC DNA]</scope>
    <source>
        <strain>SCRI 1043 / ATCC BAA-672</strain>
    </source>
</reference>
<organism>
    <name type="scientific">Pectobacterium atrosepticum (strain SCRI 1043 / ATCC BAA-672)</name>
    <name type="common">Erwinia carotovora subsp. atroseptica</name>
    <dbReference type="NCBI Taxonomy" id="218491"/>
    <lineage>
        <taxon>Bacteria</taxon>
        <taxon>Pseudomonadati</taxon>
        <taxon>Pseudomonadota</taxon>
        <taxon>Gammaproteobacteria</taxon>
        <taxon>Enterobacterales</taxon>
        <taxon>Pectobacteriaceae</taxon>
        <taxon>Pectobacterium</taxon>
    </lineage>
</organism>
<sequence length="729" mass="79145">MLYQGESLYLNWLEDGIAELVFSAPGSVNTLDTRTVASLGKALDVLAEQPNLKGLLLRSDKPAFIVGADITEFLSLFAAPAEKLHEWLVFANSIFNRLEDLPVPTLSAINSYALGGGCECVLATDFRLATPDARIGLPETKLGIMPGFGGTVRLPRLLGADSALEIIAAGKDVSAADALKVGLVQAVVANEKLIPAAIKMLKQAINGELDWLGYRRPKLEALKLNKIEAMMSFTTAKAMVLQTAGKHYPAPMLAVKTIEAAATMTRDEALQLETQHFVQLARSNEARALVGIFLNDQYVKGKAKKLVGETPVPQQAAVLGAGIMGGGIAYQSAFKGVPIRMKDINEKPLALGMNEAAKLLNKQMERGKLDGMKMATILANIHPTLDYAGFERTDIVVEAVVENPKIKASVLAETESHISESTILASNTSTIPIAVLAAALKRPQNFCGMHFFNPVHRMPLVEIIRGPKTSDSTIASVVAYASKMGKTPIVVNDCPGFFVNRVLFPYFAAFSLLLRDGADFREIDNAMEKKFGWPMGPAYLLDVVGIDTAHHAQAVMAEGFPQRMAKDYRDAIDVLFEHQRFGQKNGQGFYRYQTDSKGKQRKEQDDAVDALLKNISQPKKAFSAEEIIARMMIPMINEVARCLEEGIVASPAEADMALVYGLGFPPFHGGACRYLDTLGSERYVEMAQQLAHLGAIYQVPDGLQQKARSNEGYYPSVAPHADVSHGQPA</sequence>